<reference key="1">
    <citation type="journal article" date="2011" name="J. Bacteriol.">
        <title>Complete genome sequence of the Thermophilic Bacterium Exiguobacterium sp. AT1b.</title>
        <authorList>
            <person name="Vishnivetskaya T.A."/>
            <person name="Lucas S."/>
            <person name="Copeland A."/>
            <person name="Lapidus A."/>
            <person name="Glavina del Rio T."/>
            <person name="Dalin E."/>
            <person name="Tice H."/>
            <person name="Bruce D.C."/>
            <person name="Goodwin L.A."/>
            <person name="Pitluck S."/>
            <person name="Saunders E."/>
            <person name="Brettin T."/>
            <person name="Detter C."/>
            <person name="Han C."/>
            <person name="Larimer F."/>
            <person name="Land M.L."/>
            <person name="Hauser L.J."/>
            <person name="Kyrpides N.C."/>
            <person name="Ovchinnikova G."/>
            <person name="Kathariou S."/>
            <person name="Ramaley R.F."/>
            <person name="Rodrigues D.F."/>
            <person name="Hendrix C."/>
            <person name="Richardson P."/>
            <person name="Tiedje J.M."/>
        </authorList>
    </citation>
    <scope>NUCLEOTIDE SEQUENCE [LARGE SCALE GENOMIC DNA]</scope>
    <source>
        <strain>ATCC BAA-1283 / AT1b</strain>
    </source>
</reference>
<proteinExistence type="inferred from homology"/>
<dbReference type="EMBL" id="CP001615">
    <property type="protein sequence ID" value="ACQ70237.1"/>
    <property type="molecule type" value="Genomic_DNA"/>
</dbReference>
<dbReference type="RefSeq" id="WP_012727356.1">
    <property type="nucleotide sequence ID" value="NC_012673.1"/>
</dbReference>
<dbReference type="SMR" id="C4KYS4"/>
<dbReference type="STRING" id="360911.EAT1b_1310"/>
<dbReference type="KEGG" id="eat:EAT1b_1310"/>
<dbReference type="eggNOG" id="COG0224">
    <property type="taxonomic scope" value="Bacteria"/>
</dbReference>
<dbReference type="HOGENOM" id="CLU_050669_0_1_9"/>
<dbReference type="OrthoDB" id="9812769at2"/>
<dbReference type="Proteomes" id="UP000000716">
    <property type="component" value="Chromosome"/>
</dbReference>
<dbReference type="GO" id="GO:0005886">
    <property type="term" value="C:plasma membrane"/>
    <property type="evidence" value="ECO:0007669"/>
    <property type="project" value="UniProtKB-SubCell"/>
</dbReference>
<dbReference type="GO" id="GO:0045259">
    <property type="term" value="C:proton-transporting ATP synthase complex"/>
    <property type="evidence" value="ECO:0007669"/>
    <property type="project" value="UniProtKB-KW"/>
</dbReference>
<dbReference type="GO" id="GO:0005524">
    <property type="term" value="F:ATP binding"/>
    <property type="evidence" value="ECO:0007669"/>
    <property type="project" value="UniProtKB-UniRule"/>
</dbReference>
<dbReference type="GO" id="GO:0046933">
    <property type="term" value="F:proton-transporting ATP synthase activity, rotational mechanism"/>
    <property type="evidence" value="ECO:0007669"/>
    <property type="project" value="UniProtKB-UniRule"/>
</dbReference>
<dbReference type="GO" id="GO:0042777">
    <property type="term" value="P:proton motive force-driven plasma membrane ATP synthesis"/>
    <property type="evidence" value="ECO:0007669"/>
    <property type="project" value="UniProtKB-UniRule"/>
</dbReference>
<dbReference type="CDD" id="cd12151">
    <property type="entry name" value="F1-ATPase_gamma"/>
    <property type="match status" value="1"/>
</dbReference>
<dbReference type="FunFam" id="3.40.1380.10:FF:000002">
    <property type="entry name" value="ATP synthase gamma chain"/>
    <property type="match status" value="1"/>
</dbReference>
<dbReference type="Gene3D" id="3.40.1380.10">
    <property type="match status" value="1"/>
</dbReference>
<dbReference type="Gene3D" id="1.10.287.80">
    <property type="entry name" value="ATP synthase, gamma subunit, helix hairpin domain"/>
    <property type="match status" value="2"/>
</dbReference>
<dbReference type="HAMAP" id="MF_00815">
    <property type="entry name" value="ATP_synth_gamma_bact"/>
    <property type="match status" value="1"/>
</dbReference>
<dbReference type="InterPro" id="IPR035968">
    <property type="entry name" value="ATP_synth_F1_ATPase_gsu"/>
</dbReference>
<dbReference type="InterPro" id="IPR000131">
    <property type="entry name" value="ATP_synth_F1_gsu"/>
</dbReference>
<dbReference type="InterPro" id="IPR023632">
    <property type="entry name" value="ATP_synth_F1_gsu_CS"/>
</dbReference>
<dbReference type="NCBIfam" id="TIGR01146">
    <property type="entry name" value="ATPsyn_F1gamma"/>
    <property type="match status" value="1"/>
</dbReference>
<dbReference type="PANTHER" id="PTHR11693">
    <property type="entry name" value="ATP SYNTHASE GAMMA CHAIN"/>
    <property type="match status" value="1"/>
</dbReference>
<dbReference type="PANTHER" id="PTHR11693:SF22">
    <property type="entry name" value="ATP SYNTHASE SUBUNIT GAMMA, MITOCHONDRIAL"/>
    <property type="match status" value="1"/>
</dbReference>
<dbReference type="Pfam" id="PF00231">
    <property type="entry name" value="ATP-synt"/>
    <property type="match status" value="1"/>
</dbReference>
<dbReference type="PRINTS" id="PR00126">
    <property type="entry name" value="ATPASEGAMMA"/>
</dbReference>
<dbReference type="SUPFAM" id="SSF52943">
    <property type="entry name" value="ATP synthase (F1-ATPase), gamma subunit"/>
    <property type="match status" value="1"/>
</dbReference>
<dbReference type="PROSITE" id="PS00153">
    <property type="entry name" value="ATPASE_GAMMA"/>
    <property type="match status" value="1"/>
</dbReference>
<keyword id="KW-0066">ATP synthesis</keyword>
<keyword id="KW-1003">Cell membrane</keyword>
<keyword id="KW-0139">CF(1)</keyword>
<keyword id="KW-0375">Hydrogen ion transport</keyword>
<keyword id="KW-0406">Ion transport</keyword>
<keyword id="KW-0472">Membrane</keyword>
<keyword id="KW-0813">Transport</keyword>
<name>ATPG_EXISA</name>
<organism>
    <name type="scientific">Exiguobacterium sp. (strain ATCC BAA-1283 / AT1b)</name>
    <dbReference type="NCBI Taxonomy" id="360911"/>
    <lineage>
        <taxon>Bacteria</taxon>
        <taxon>Bacillati</taxon>
        <taxon>Bacillota</taxon>
        <taxon>Bacilli</taxon>
        <taxon>Bacillales</taxon>
        <taxon>Bacillales Family XII. Incertae Sedis</taxon>
        <taxon>Exiguobacterium</taxon>
    </lineage>
</organism>
<accession>C4KYS4</accession>
<feature type="chain" id="PRO_1000213035" description="ATP synthase gamma chain">
    <location>
        <begin position="1"/>
        <end position="285"/>
    </location>
</feature>
<gene>
    <name evidence="1" type="primary">atpG</name>
    <name type="ordered locus">EAT1b_1310</name>
</gene>
<sequence length="285" mass="31373">MASLREIQMRITSTQSTKQITKAMNMVSASKLNRAQGNNANFKPYMDKLQEVISSIAGGTSGATHPMLQVRPVKRTGYIVITSDRGLAGGYNASVLRDVYRELKDKHTSTDEYRLYVIGKVGVQFFKSRNIPVYSAMTGLNDQPTFVEVAEIVKQTVGAFSEGEIDELKLCYNSFISVISQEVKIQQLLPLGDIEQSASNVMYEYEPEEETILAALLPRYAEGLIYGALLDAKVSEHAARMTAMSSATDNADELIRGLKLKFNRARQAAITQEITEIVGGASALE</sequence>
<comment type="function">
    <text evidence="1">Produces ATP from ADP in the presence of a proton gradient across the membrane. The gamma chain is believed to be important in regulating ATPase activity and the flow of protons through the CF(0) complex.</text>
</comment>
<comment type="subunit">
    <text evidence="1">F-type ATPases have 2 components, CF(1) - the catalytic core - and CF(0) - the membrane proton channel. CF(1) has five subunits: alpha(3), beta(3), gamma(1), delta(1), epsilon(1). CF(0) has three main subunits: a, b and c.</text>
</comment>
<comment type="subcellular location">
    <subcellularLocation>
        <location evidence="1">Cell membrane</location>
        <topology evidence="1">Peripheral membrane protein</topology>
    </subcellularLocation>
</comment>
<comment type="similarity">
    <text evidence="1">Belongs to the ATPase gamma chain family.</text>
</comment>
<protein>
    <recommendedName>
        <fullName evidence="1">ATP synthase gamma chain</fullName>
    </recommendedName>
    <alternativeName>
        <fullName evidence="1">ATP synthase F1 sector gamma subunit</fullName>
    </alternativeName>
    <alternativeName>
        <fullName evidence="1">F-ATPase gamma subunit</fullName>
    </alternativeName>
</protein>
<evidence type="ECO:0000255" key="1">
    <source>
        <dbReference type="HAMAP-Rule" id="MF_00815"/>
    </source>
</evidence>